<proteinExistence type="inferred from homology"/>
<feature type="chain" id="PRO_0000111042" description="Oligoribonuclease">
    <location>
        <begin position="1"/>
        <end position="187"/>
    </location>
</feature>
<feature type="domain" description="Exonuclease" evidence="1">
    <location>
        <begin position="7"/>
        <end position="170"/>
    </location>
</feature>
<feature type="active site" evidence="1">
    <location>
        <position position="128"/>
    </location>
</feature>
<comment type="function">
    <text evidence="1">3'-to-5' exoribonuclease specific for small oligoribonucleotides.</text>
</comment>
<comment type="subcellular location">
    <subcellularLocation>
        <location evidence="1">Cytoplasm</location>
    </subcellularLocation>
</comment>
<comment type="similarity">
    <text evidence="1">Belongs to the oligoribonuclease family.</text>
</comment>
<accession>Q5X1E6</accession>
<protein>
    <recommendedName>
        <fullName evidence="1">Oligoribonuclease</fullName>
        <ecNumber evidence="1">3.1.15.-</ecNumber>
    </recommendedName>
</protein>
<keyword id="KW-0963">Cytoplasm</keyword>
<keyword id="KW-0269">Exonuclease</keyword>
<keyword id="KW-0378">Hydrolase</keyword>
<keyword id="KW-0540">Nuclease</keyword>
<dbReference type="EC" id="3.1.15.-" evidence="1"/>
<dbReference type="EMBL" id="CR628336">
    <property type="protein sequence ID" value="CAH13950.1"/>
    <property type="molecule type" value="Genomic_DNA"/>
</dbReference>
<dbReference type="RefSeq" id="WP_010948439.1">
    <property type="nucleotide sequence ID" value="NC_006368.1"/>
</dbReference>
<dbReference type="SMR" id="Q5X1E6"/>
<dbReference type="GeneID" id="57036742"/>
<dbReference type="KEGG" id="lpp:lpp2797"/>
<dbReference type="LegioList" id="lpp2797"/>
<dbReference type="HOGENOM" id="CLU_064761_2_0_6"/>
<dbReference type="GO" id="GO:0005737">
    <property type="term" value="C:cytoplasm"/>
    <property type="evidence" value="ECO:0007669"/>
    <property type="project" value="UniProtKB-SubCell"/>
</dbReference>
<dbReference type="GO" id="GO:0000175">
    <property type="term" value="F:3'-5'-RNA exonuclease activity"/>
    <property type="evidence" value="ECO:0007669"/>
    <property type="project" value="InterPro"/>
</dbReference>
<dbReference type="GO" id="GO:0003676">
    <property type="term" value="F:nucleic acid binding"/>
    <property type="evidence" value="ECO:0007669"/>
    <property type="project" value="InterPro"/>
</dbReference>
<dbReference type="GO" id="GO:0006259">
    <property type="term" value="P:DNA metabolic process"/>
    <property type="evidence" value="ECO:0007669"/>
    <property type="project" value="UniProtKB-ARBA"/>
</dbReference>
<dbReference type="CDD" id="cd06135">
    <property type="entry name" value="Orn"/>
    <property type="match status" value="1"/>
</dbReference>
<dbReference type="FunFam" id="3.30.420.10:FF:000003">
    <property type="entry name" value="Oligoribonuclease"/>
    <property type="match status" value="1"/>
</dbReference>
<dbReference type="Gene3D" id="3.30.420.10">
    <property type="entry name" value="Ribonuclease H-like superfamily/Ribonuclease H"/>
    <property type="match status" value="1"/>
</dbReference>
<dbReference type="HAMAP" id="MF_00045">
    <property type="entry name" value="Oligoribonuclease"/>
    <property type="match status" value="1"/>
</dbReference>
<dbReference type="InterPro" id="IPR013520">
    <property type="entry name" value="Exonuclease_RNaseT/DNA_pol3"/>
</dbReference>
<dbReference type="InterPro" id="IPR022894">
    <property type="entry name" value="Oligoribonuclease"/>
</dbReference>
<dbReference type="InterPro" id="IPR012337">
    <property type="entry name" value="RNaseH-like_sf"/>
</dbReference>
<dbReference type="InterPro" id="IPR036397">
    <property type="entry name" value="RNaseH_sf"/>
</dbReference>
<dbReference type="NCBIfam" id="NF003765">
    <property type="entry name" value="PRK05359.1"/>
    <property type="match status" value="1"/>
</dbReference>
<dbReference type="PANTHER" id="PTHR11046">
    <property type="entry name" value="OLIGORIBONUCLEASE, MITOCHONDRIAL"/>
    <property type="match status" value="1"/>
</dbReference>
<dbReference type="PANTHER" id="PTHR11046:SF0">
    <property type="entry name" value="OLIGORIBONUCLEASE, MITOCHONDRIAL"/>
    <property type="match status" value="1"/>
</dbReference>
<dbReference type="Pfam" id="PF00929">
    <property type="entry name" value="RNase_T"/>
    <property type="match status" value="1"/>
</dbReference>
<dbReference type="SMART" id="SM00479">
    <property type="entry name" value="EXOIII"/>
    <property type="match status" value="1"/>
</dbReference>
<dbReference type="SUPFAM" id="SSF53098">
    <property type="entry name" value="Ribonuclease H-like"/>
    <property type="match status" value="1"/>
</dbReference>
<sequence>MKNNQNLIWIDLEMTGLEPEQDRIIEMATIVTDPQLNILAEGPVIAVSQPKILLDSMDAWNTKQHNQSGLVKRVLESNVSESQAEQLTIEFLKQYVDKGKSPMCGNSICQDRRFLYKYMPELAAYFHYRNLDVSSLKELVLRWRPELMNGVVKESKHLALDDIKDSINELIYYRQHFINLPEVKNDK</sequence>
<organism>
    <name type="scientific">Legionella pneumophila (strain Paris)</name>
    <dbReference type="NCBI Taxonomy" id="297246"/>
    <lineage>
        <taxon>Bacteria</taxon>
        <taxon>Pseudomonadati</taxon>
        <taxon>Pseudomonadota</taxon>
        <taxon>Gammaproteobacteria</taxon>
        <taxon>Legionellales</taxon>
        <taxon>Legionellaceae</taxon>
        <taxon>Legionella</taxon>
    </lineage>
</organism>
<gene>
    <name evidence="1" type="primary">orn</name>
    <name type="ordered locus">lpp2797</name>
</gene>
<name>ORN_LEGPA</name>
<evidence type="ECO:0000255" key="1">
    <source>
        <dbReference type="HAMAP-Rule" id="MF_00045"/>
    </source>
</evidence>
<reference key="1">
    <citation type="journal article" date="2004" name="Nat. Genet.">
        <title>Evidence in the Legionella pneumophila genome for exploitation of host cell functions and high genome plasticity.</title>
        <authorList>
            <person name="Cazalet C."/>
            <person name="Rusniok C."/>
            <person name="Brueggemann H."/>
            <person name="Zidane N."/>
            <person name="Magnier A."/>
            <person name="Ma L."/>
            <person name="Tichit M."/>
            <person name="Jarraud S."/>
            <person name="Bouchier C."/>
            <person name="Vandenesch F."/>
            <person name="Kunst F."/>
            <person name="Etienne J."/>
            <person name="Glaser P."/>
            <person name="Buchrieser C."/>
        </authorList>
    </citation>
    <scope>NUCLEOTIDE SEQUENCE [LARGE SCALE GENOMIC DNA]</scope>
    <source>
        <strain>Paris</strain>
    </source>
</reference>